<keyword id="KW-0025">Alternative splicing</keyword>
<keyword id="KW-0472">Membrane</keyword>
<keyword id="KW-0597">Phosphoprotein</keyword>
<keyword id="KW-1267">Proteomics identification</keyword>
<keyword id="KW-1185">Reference proteome</keyword>
<keyword id="KW-0812">Transmembrane</keyword>
<keyword id="KW-1133">Transmembrane helix</keyword>
<name>C2CD2_HUMAN</name>
<evidence type="ECO:0000250" key="1">
    <source>
        <dbReference type="UniProtKB" id="E9Q3C1"/>
    </source>
</evidence>
<evidence type="ECO:0000255" key="2"/>
<evidence type="ECO:0000255" key="3">
    <source>
        <dbReference type="PROSITE-ProRule" id="PRU00041"/>
    </source>
</evidence>
<evidence type="ECO:0000256" key="4">
    <source>
        <dbReference type="SAM" id="MobiDB-lite"/>
    </source>
</evidence>
<evidence type="ECO:0000303" key="5">
    <source>
    </source>
</evidence>
<evidence type="ECO:0000305" key="6"/>
<evidence type="ECO:0007744" key="7">
    <source>
    </source>
</evidence>
<evidence type="ECO:0007744" key="8">
    <source>
    </source>
</evidence>
<evidence type="ECO:0007744" key="9">
    <source>
    </source>
</evidence>
<organism>
    <name type="scientific">Homo sapiens</name>
    <name type="common">Human</name>
    <dbReference type="NCBI Taxonomy" id="9606"/>
    <lineage>
        <taxon>Eukaryota</taxon>
        <taxon>Metazoa</taxon>
        <taxon>Chordata</taxon>
        <taxon>Craniata</taxon>
        <taxon>Vertebrata</taxon>
        <taxon>Euteleostomi</taxon>
        <taxon>Mammalia</taxon>
        <taxon>Eutheria</taxon>
        <taxon>Euarchontoglires</taxon>
        <taxon>Primates</taxon>
        <taxon>Haplorrhini</taxon>
        <taxon>Catarrhini</taxon>
        <taxon>Hominidae</taxon>
        <taxon>Homo</taxon>
    </lineage>
</organism>
<gene>
    <name type="primary">C2CD2</name>
    <name type="synonym">C21orf25</name>
    <name type="synonym">C21orf258</name>
    <name type="synonym">TMEM24L</name>
</gene>
<protein>
    <recommendedName>
        <fullName>C2 domain-containing protein 2</fullName>
    </recommendedName>
    <alternativeName>
        <fullName>Transmembrane protein 24-like</fullName>
    </alternativeName>
</protein>
<accession>Q9Y426</accession>
<accession>Q5R2V7</accession>
<accession>Q6AHX8</accession>
<accession>Q9NSE6</accession>
<comment type="subcellular location">
    <subcellularLocation>
        <location evidence="6">Membrane</location>
        <topology evidence="6">Single-pass membrane protein</topology>
    </subcellularLocation>
</comment>
<comment type="alternative products">
    <event type="alternative splicing"/>
    <isoform>
        <id>Q9Y426-1</id>
        <name>1</name>
        <sequence type="displayed"/>
    </isoform>
    <isoform>
        <id>Q9Y426-2</id>
        <name>2</name>
        <sequence type="described" ref="VSP_041071"/>
    </isoform>
    <isoform>
        <id>Q9Y426-3</id>
        <name>3</name>
        <sequence type="described" ref="VSP_041072"/>
    </isoform>
</comment>
<comment type="sequence caution" evidence="6">
    <conflict type="erroneous gene model prediction">
        <sequence resource="EMBL-CDS" id="BAA95528"/>
    </conflict>
</comment>
<comment type="sequence caution" evidence="6">
    <conflict type="miscellaneous discrepancy">
        <sequence resource="EMBL-CDS" id="CAH10536"/>
    </conflict>
    <text>Intron retention.</text>
</comment>
<dbReference type="EMBL" id="AB047784">
    <property type="protein sequence ID" value="BAD74068.1"/>
    <property type="molecule type" value="mRNA"/>
</dbReference>
<dbReference type="EMBL" id="AB047785">
    <property type="protein sequence ID" value="BAD74069.1"/>
    <property type="molecule type" value="mRNA"/>
</dbReference>
<dbReference type="EMBL" id="AL050173">
    <property type="protein sequence ID" value="CAB43307.1"/>
    <property type="molecule type" value="mRNA"/>
</dbReference>
<dbReference type="EMBL" id="AL833323">
    <property type="status" value="NOT_ANNOTATED_CDS"/>
    <property type="molecule type" value="mRNA"/>
</dbReference>
<dbReference type="EMBL" id="CR627455">
    <property type="protein sequence ID" value="CAH10536.1"/>
    <property type="status" value="ALT_SEQ"/>
    <property type="molecule type" value="mRNA"/>
</dbReference>
<dbReference type="EMBL" id="AP001745">
    <property type="protein sequence ID" value="BAA95528.1"/>
    <property type="status" value="ALT_SEQ"/>
    <property type="molecule type" value="Genomic_DNA"/>
</dbReference>
<dbReference type="EMBL" id="AP001619">
    <property type="status" value="NOT_ANNOTATED_CDS"/>
    <property type="molecule type" value="Genomic_DNA"/>
</dbReference>
<dbReference type="CCDS" id="CCDS13677.1">
    <molecule id="Q9Y426-2"/>
</dbReference>
<dbReference type="CCDS" id="CCDS42933.1">
    <molecule id="Q9Y426-1"/>
</dbReference>
<dbReference type="PIR" id="T08793">
    <property type="entry name" value="T08793"/>
</dbReference>
<dbReference type="RefSeq" id="NP_056315.1">
    <molecule id="Q9Y426-1"/>
    <property type="nucleotide sequence ID" value="NM_015500.2"/>
</dbReference>
<dbReference type="RefSeq" id="NP_950251.1">
    <molecule id="Q9Y426-2"/>
    <property type="nucleotide sequence ID" value="NM_199050.3"/>
</dbReference>
<dbReference type="RefSeq" id="XP_005261166.1">
    <molecule id="Q9Y426-2"/>
    <property type="nucleotide sequence ID" value="XM_005261109.5"/>
</dbReference>
<dbReference type="RefSeq" id="XP_054180402.1">
    <molecule id="Q9Y426-2"/>
    <property type="nucleotide sequence ID" value="XM_054324427.1"/>
</dbReference>
<dbReference type="BioGRID" id="117454">
    <property type="interactions" value="95"/>
</dbReference>
<dbReference type="FunCoup" id="Q9Y426">
    <property type="interactions" value="2092"/>
</dbReference>
<dbReference type="IntAct" id="Q9Y426">
    <property type="interactions" value="35"/>
</dbReference>
<dbReference type="STRING" id="9606.ENSP00000369853"/>
<dbReference type="GlyGen" id="Q9Y426">
    <property type="glycosylation" value="1 site, 1 O-linked glycan (1 site)"/>
</dbReference>
<dbReference type="iPTMnet" id="Q9Y426"/>
<dbReference type="PhosphoSitePlus" id="Q9Y426"/>
<dbReference type="SwissPalm" id="Q9Y426"/>
<dbReference type="BioMuta" id="C2CD2"/>
<dbReference type="DMDM" id="85681926"/>
<dbReference type="jPOST" id="Q9Y426"/>
<dbReference type="MassIVE" id="Q9Y426"/>
<dbReference type="PaxDb" id="9606-ENSP00000369853"/>
<dbReference type="PeptideAtlas" id="Q9Y426"/>
<dbReference type="ProteomicsDB" id="86093">
    <molecule id="Q9Y426-1"/>
</dbReference>
<dbReference type="ProteomicsDB" id="86094">
    <molecule id="Q9Y426-2"/>
</dbReference>
<dbReference type="ProteomicsDB" id="86095">
    <molecule id="Q9Y426-3"/>
</dbReference>
<dbReference type="Pumba" id="Q9Y426"/>
<dbReference type="Antibodypedia" id="23680">
    <property type="antibodies" value="58 antibodies from 10 providers"/>
</dbReference>
<dbReference type="DNASU" id="25966"/>
<dbReference type="Ensembl" id="ENST00000329623.11">
    <molecule id="Q9Y426-2"/>
    <property type="protein sequence ID" value="ENSP00000329302.7"/>
    <property type="gene ID" value="ENSG00000157617.17"/>
</dbReference>
<dbReference type="Ensembl" id="ENST00000380486.4">
    <molecule id="Q9Y426-1"/>
    <property type="protein sequence ID" value="ENSP00000369853.3"/>
    <property type="gene ID" value="ENSG00000157617.17"/>
</dbReference>
<dbReference type="GeneID" id="25966"/>
<dbReference type="KEGG" id="hsa:25966"/>
<dbReference type="MANE-Select" id="ENST00000380486.4">
    <property type="protein sequence ID" value="ENSP00000369853.3"/>
    <property type="RefSeq nucleotide sequence ID" value="NM_015500.2"/>
    <property type="RefSeq protein sequence ID" value="NP_056315.1"/>
</dbReference>
<dbReference type="UCSC" id="uc002yzv.4">
    <molecule id="Q9Y426-1"/>
    <property type="organism name" value="human"/>
</dbReference>
<dbReference type="AGR" id="HGNC:1266"/>
<dbReference type="CTD" id="25966"/>
<dbReference type="DisGeNET" id="25966"/>
<dbReference type="GeneCards" id="C2CD2"/>
<dbReference type="HGNC" id="HGNC:1266">
    <property type="gene designation" value="C2CD2"/>
</dbReference>
<dbReference type="HPA" id="ENSG00000157617">
    <property type="expression patterns" value="Tissue enhanced (adrenal)"/>
</dbReference>
<dbReference type="MIM" id="617581">
    <property type="type" value="gene"/>
</dbReference>
<dbReference type="neXtProt" id="NX_Q9Y426"/>
<dbReference type="OpenTargets" id="ENSG00000157617"/>
<dbReference type="PharmGKB" id="PA162379018"/>
<dbReference type="VEuPathDB" id="HostDB:ENSG00000157617"/>
<dbReference type="eggNOG" id="ENOG502QV5U">
    <property type="taxonomic scope" value="Eukaryota"/>
</dbReference>
<dbReference type="GeneTree" id="ENSGT00530000063764"/>
<dbReference type="HOGENOM" id="CLU_024872_0_0_1"/>
<dbReference type="InParanoid" id="Q9Y426"/>
<dbReference type="OMA" id="QEKVVTC"/>
<dbReference type="OrthoDB" id="9976063at2759"/>
<dbReference type="PAN-GO" id="Q9Y426">
    <property type="GO annotations" value="0 GO annotations based on evolutionary models"/>
</dbReference>
<dbReference type="PhylomeDB" id="Q9Y426"/>
<dbReference type="TreeFam" id="TF331604"/>
<dbReference type="PathwayCommons" id="Q9Y426"/>
<dbReference type="SignaLink" id="Q9Y426"/>
<dbReference type="BioGRID-ORCS" id="25966">
    <property type="hits" value="10 hits in 1157 CRISPR screens"/>
</dbReference>
<dbReference type="ChiTaRS" id="C2CD2">
    <property type="organism name" value="human"/>
</dbReference>
<dbReference type="GenomeRNAi" id="25966"/>
<dbReference type="Pharos" id="Q9Y426">
    <property type="development level" value="Tdark"/>
</dbReference>
<dbReference type="PRO" id="PR:Q9Y426"/>
<dbReference type="Proteomes" id="UP000005640">
    <property type="component" value="Chromosome 21"/>
</dbReference>
<dbReference type="RNAct" id="Q9Y426">
    <property type="molecule type" value="protein"/>
</dbReference>
<dbReference type="Bgee" id="ENSG00000157617">
    <property type="expression patterns" value="Expressed in right adrenal gland cortex and 187 other cell types or tissues"/>
</dbReference>
<dbReference type="ExpressionAtlas" id="Q9Y426">
    <property type="expression patterns" value="baseline and differential"/>
</dbReference>
<dbReference type="GO" id="GO:0005829">
    <property type="term" value="C:cytosol"/>
    <property type="evidence" value="ECO:0007005"/>
    <property type="project" value="UniProtKB"/>
</dbReference>
<dbReference type="GO" id="GO:0016020">
    <property type="term" value="C:membrane"/>
    <property type="evidence" value="ECO:0007669"/>
    <property type="project" value="UniProtKB-SubCell"/>
</dbReference>
<dbReference type="GO" id="GO:0005634">
    <property type="term" value="C:nucleus"/>
    <property type="evidence" value="ECO:0007005"/>
    <property type="project" value="UniProtKB"/>
</dbReference>
<dbReference type="CDD" id="cd08678">
    <property type="entry name" value="C2_C21orf25-like"/>
    <property type="match status" value="1"/>
</dbReference>
<dbReference type="CDD" id="cd21682">
    <property type="entry name" value="SMP_C2CD2"/>
    <property type="match status" value="1"/>
</dbReference>
<dbReference type="FunFam" id="2.60.40.150:FF:000206">
    <property type="entry name" value="C2 calcium-dependent domain containing 2"/>
    <property type="match status" value="1"/>
</dbReference>
<dbReference type="Gene3D" id="2.60.40.150">
    <property type="entry name" value="C2 domain"/>
    <property type="match status" value="1"/>
</dbReference>
<dbReference type="InterPro" id="IPR000008">
    <property type="entry name" value="C2_dom"/>
</dbReference>
<dbReference type="InterPro" id="IPR035892">
    <property type="entry name" value="C2_domain_sf"/>
</dbReference>
<dbReference type="InterPro" id="IPR039934">
    <property type="entry name" value="C2CD2/C2CD2L"/>
</dbReference>
<dbReference type="InterPro" id="IPR040885">
    <property type="entry name" value="SMP_C2CD2L"/>
</dbReference>
<dbReference type="PANTHER" id="PTHR21119">
    <property type="entry name" value="C2 DOMAIN-CONTAINING PROTEIN"/>
    <property type="match status" value="1"/>
</dbReference>
<dbReference type="PANTHER" id="PTHR21119:SF7">
    <property type="entry name" value="C2 DOMAIN-CONTAINING PROTEIN 2"/>
    <property type="match status" value="1"/>
</dbReference>
<dbReference type="Pfam" id="PF00168">
    <property type="entry name" value="C2"/>
    <property type="match status" value="1"/>
</dbReference>
<dbReference type="Pfam" id="PF18696">
    <property type="entry name" value="SMP_C2CD2L"/>
    <property type="match status" value="1"/>
</dbReference>
<dbReference type="SUPFAM" id="SSF49562">
    <property type="entry name" value="C2 domain (Calcium/lipid-binding domain, CaLB)"/>
    <property type="match status" value="1"/>
</dbReference>
<dbReference type="PROSITE" id="PS50004">
    <property type="entry name" value="C2"/>
    <property type="match status" value="1"/>
</dbReference>
<reference key="1">
    <citation type="submission" date="2000-08" db="EMBL/GenBank/DDBJ databases">
        <title>Homo sapiens mRNA for C21orf25 long form, complete cds.</title>
        <authorList>
            <person name="Shimizu N."/>
            <person name="Kudoh J."/>
            <person name="Shibuya K."/>
        </authorList>
    </citation>
    <scope>NUCLEOTIDE SEQUENCE [MRNA] (ISOFORM 1)</scope>
    <source>
        <tissue>Fetal brain</tissue>
        <tissue>Pancreas</tissue>
    </source>
</reference>
<reference key="2">
    <citation type="journal article" date="2007" name="BMC Genomics">
        <title>The full-ORF clone resource of the German cDNA consortium.</title>
        <authorList>
            <person name="Bechtel S."/>
            <person name="Rosenfelder H."/>
            <person name="Duda A."/>
            <person name="Schmidt C.P."/>
            <person name="Ernst U."/>
            <person name="Wellenreuther R."/>
            <person name="Mehrle A."/>
            <person name="Schuster C."/>
            <person name="Bahr A."/>
            <person name="Bloecker H."/>
            <person name="Heubner D."/>
            <person name="Hoerlein A."/>
            <person name="Michel G."/>
            <person name="Wedler H."/>
            <person name="Koehrer K."/>
            <person name="Ottenwaelder B."/>
            <person name="Poustka A."/>
            <person name="Wiemann S."/>
            <person name="Schupp I."/>
        </authorList>
    </citation>
    <scope>NUCLEOTIDE SEQUENCE [LARGE SCALE MRNA] (ISOFORM 2)</scope>
    <scope>NUCLEOTIDE SEQUENCE [LARGE SCALE MRNA] OF 511-696 (ISOFORM 3)</scope>
    <source>
        <tissue>Cervix</tissue>
        <tissue>Testis</tissue>
        <tissue>Uterus</tissue>
    </source>
</reference>
<reference key="3">
    <citation type="journal article" date="2000" name="Nature">
        <title>The DNA sequence of human chromosome 21.</title>
        <authorList>
            <person name="Hattori M."/>
            <person name="Fujiyama A."/>
            <person name="Taylor T.D."/>
            <person name="Watanabe H."/>
            <person name="Yada T."/>
            <person name="Park H.-S."/>
            <person name="Toyoda A."/>
            <person name="Ishii K."/>
            <person name="Totoki Y."/>
            <person name="Choi D.-K."/>
            <person name="Groner Y."/>
            <person name="Soeda E."/>
            <person name="Ohki M."/>
            <person name="Takagi T."/>
            <person name="Sakaki Y."/>
            <person name="Taudien S."/>
            <person name="Blechschmidt K."/>
            <person name="Polley A."/>
            <person name="Menzel U."/>
            <person name="Delabar J."/>
            <person name="Kumpf K."/>
            <person name="Lehmann R."/>
            <person name="Patterson D."/>
            <person name="Reichwald K."/>
            <person name="Rump A."/>
            <person name="Schillhabel M."/>
            <person name="Schudy A."/>
            <person name="Zimmermann W."/>
            <person name="Rosenthal A."/>
            <person name="Kudoh J."/>
            <person name="Shibuya K."/>
            <person name="Kawasaki K."/>
            <person name="Asakawa S."/>
            <person name="Shintani A."/>
            <person name="Sasaki T."/>
            <person name="Nagamine K."/>
            <person name="Mitsuyama S."/>
            <person name="Antonarakis S.E."/>
            <person name="Minoshima S."/>
            <person name="Shimizu N."/>
            <person name="Nordsiek G."/>
            <person name="Hornischer K."/>
            <person name="Brandt P."/>
            <person name="Scharfe M."/>
            <person name="Schoen O."/>
            <person name="Desario A."/>
            <person name="Reichelt J."/>
            <person name="Kauer G."/>
            <person name="Bloecker H."/>
            <person name="Ramser J."/>
            <person name="Beck A."/>
            <person name="Klages S."/>
            <person name="Hennig S."/>
            <person name="Riesselmann L."/>
            <person name="Dagand E."/>
            <person name="Wehrmeyer S."/>
            <person name="Borzym K."/>
            <person name="Gardiner K."/>
            <person name="Nizetic D."/>
            <person name="Francis F."/>
            <person name="Lehrach H."/>
            <person name="Reinhardt R."/>
            <person name="Yaspo M.-L."/>
        </authorList>
    </citation>
    <scope>NUCLEOTIDE SEQUENCE [LARGE SCALE GENOMIC DNA]</scope>
</reference>
<reference key="4">
    <citation type="journal article" date="2008" name="Proc. Natl. Acad. Sci. U.S.A.">
        <title>A quantitative atlas of mitotic phosphorylation.</title>
        <authorList>
            <person name="Dephoure N."/>
            <person name="Zhou C."/>
            <person name="Villen J."/>
            <person name="Beausoleil S.A."/>
            <person name="Bakalarski C.E."/>
            <person name="Elledge S.J."/>
            <person name="Gygi S.P."/>
        </authorList>
    </citation>
    <scope>PHOSPHORYLATION [LARGE SCALE ANALYSIS] AT SER-435; SER-441 AND THR-445</scope>
    <scope>IDENTIFICATION BY MASS SPECTROMETRY [LARGE SCALE ANALYSIS]</scope>
    <source>
        <tissue>Cervix carcinoma</tissue>
    </source>
</reference>
<reference key="5">
    <citation type="journal article" date="2013" name="J. Proteome Res.">
        <title>Toward a comprehensive characterization of a human cancer cell phosphoproteome.</title>
        <authorList>
            <person name="Zhou H."/>
            <person name="Di Palma S."/>
            <person name="Preisinger C."/>
            <person name="Peng M."/>
            <person name="Polat A.N."/>
            <person name="Heck A.J."/>
            <person name="Mohammed S."/>
        </authorList>
    </citation>
    <scope>PHOSPHORYLATION [LARGE SCALE ANALYSIS] AT SER-435 AND SER-441</scope>
    <scope>IDENTIFICATION BY MASS SPECTROMETRY [LARGE SCALE ANALYSIS]</scope>
    <source>
        <tissue>Cervix carcinoma</tissue>
        <tissue>Erythroleukemia</tissue>
    </source>
</reference>
<reference key="6">
    <citation type="journal article" date="2014" name="J. Proteomics">
        <title>An enzyme assisted RP-RPLC approach for in-depth analysis of human liver phosphoproteome.</title>
        <authorList>
            <person name="Bian Y."/>
            <person name="Song C."/>
            <person name="Cheng K."/>
            <person name="Dong M."/>
            <person name="Wang F."/>
            <person name="Huang J."/>
            <person name="Sun D."/>
            <person name="Wang L."/>
            <person name="Ye M."/>
            <person name="Zou H."/>
        </authorList>
    </citation>
    <scope>PHOSPHORYLATION [LARGE SCALE ANALYSIS] AT SER-435</scope>
    <scope>IDENTIFICATION BY MASS SPECTROMETRY [LARGE SCALE ANALYSIS]</scope>
    <source>
        <tissue>Liver</tissue>
    </source>
</reference>
<feature type="chain" id="PRO_0000045386" description="C2 domain-containing protein 2">
    <location>
        <begin position="1"/>
        <end position="696"/>
    </location>
</feature>
<feature type="transmembrane region" description="Helical" evidence="2">
    <location>
        <begin position="13"/>
        <end position="33"/>
    </location>
</feature>
<feature type="domain" description="SMP-LBD" evidence="6">
    <location>
        <begin position="51"/>
        <end position="242"/>
    </location>
</feature>
<feature type="domain" description="C2" evidence="3">
    <location>
        <begin position="245"/>
        <end position="362"/>
    </location>
</feature>
<feature type="region of interest" description="Disordered" evidence="4">
    <location>
        <begin position="539"/>
        <end position="580"/>
    </location>
</feature>
<feature type="compositionally biased region" description="Basic and acidic residues" evidence="4">
    <location>
        <begin position="542"/>
        <end position="553"/>
    </location>
</feature>
<feature type="compositionally biased region" description="Low complexity" evidence="4">
    <location>
        <begin position="554"/>
        <end position="572"/>
    </location>
</feature>
<feature type="modified residue" description="Phosphoserine" evidence="1">
    <location>
        <position position="60"/>
    </location>
</feature>
<feature type="modified residue" description="Phosphoserine" evidence="7 8 9">
    <location>
        <position position="435"/>
    </location>
</feature>
<feature type="modified residue" description="Phosphoserine" evidence="7 8">
    <location>
        <position position="441"/>
    </location>
</feature>
<feature type="modified residue" description="Phosphothreonine" evidence="7">
    <location>
        <position position="445"/>
    </location>
</feature>
<feature type="modified residue" description="Phosphoserine" evidence="1">
    <location>
        <position position="581"/>
    </location>
</feature>
<feature type="splice variant" id="VSP_041071" description="In isoform 2." evidence="5">
    <location>
        <begin position="1"/>
        <end position="155"/>
    </location>
</feature>
<feature type="splice variant" id="VSP_041072" description="In isoform 3." evidence="5">
    <location>
        <begin position="521"/>
        <end position="525"/>
    </location>
</feature>
<feature type="sequence variant" id="VAR_050928" description="In dbSNP:rs2839421.">
    <original>V</original>
    <variation>A</variation>
    <location>
        <position position="211"/>
    </location>
</feature>
<feature type="sequence variant" id="VAR_050929" description="In dbSNP:rs9981024.">
    <original>T</original>
    <variation>A</variation>
    <location>
        <position position="618"/>
    </location>
</feature>
<feature type="sequence conflict" description="In Ref. 2; CAH10536." evidence="6" ref="2">
    <original>A</original>
    <variation>T</variation>
    <location>
        <position position="460"/>
    </location>
</feature>
<feature type="sequence conflict" description="In Ref. 2; CAH10536." evidence="6" ref="2">
    <original>H</original>
    <variation>R</variation>
    <location>
        <position position="639"/>
    </location>
</feature>
<feature type="sequence conflict" description="In Ref. 2; CAH10536." evidence="6" ref="2">
    <original>S</original>
    <variation>P</variation>
    <location>
        <position position="679"/>
    </location>
</feature>
<sequence>MAMARLGSWLGEAQWLALVSLFVAALATVGLYLAQWALARARPQPQRRAVEPGEGPRPGSDALLSWILTLGSWRSQWQAAWVTALNEEAERKGGPPFLSFEEDPRQQALELVVQEVSSVLRSAEEKVVVCHVVGQAIQFLVSETPALGAGCRLYDMRLSPFHLQLEFHMKEKREDLQISWSFISVPEMAVNIQPKALGEDQVAETSAMSDVLKDILKHLAGSASPSVVLITKPTTVKEAQNLQCAASTAQESCPPKPPRAHELKLLVRNIHVLLLSEPGASGHINAVCVVQLNDPVQRFSSTLTKNTPDLMWEEEFTFELNAKSKELHLQISEAGRSSEGLLATATVPLDLFKKQPSGPQSFTLTSGSACGSSVLGSVTAEFSYMEPGELKSWPIPPPVPAAKIEKDRTVMPCGTVVTTVTAVKTKPRVDVGRASPLSSDSPVKTPIKVKVIEKDISVQAIACRSAPVSKTLSSSDTELLVLNGSDPVAEVAIRQLSESSKLKLKSPRKKSTIIISGISKTSLSQDHDAALMQGYTASVDSTHQEDAPSHPERAAASAPPEEAESAQASLAPKPQEDELDSWDLEKEPQAAAWSSQVLLDPDGDELSESSMSVLEPGTAKKHKGGILRKGAKLFFRRRHQQKDPGMSQSHNDLVFLEQPEGSRRKGITLTRILNKKLLSRHRNKNTMNGAPVEPCT</sequence>
<proteinExistence type="evidence at protein level"/>